<proteinExistence type="inferred from homology"/>
<keyword id="KW-0028">Amino-acid biosynthesis</keyword>
<keyword id="KW-0057">Aromatic amino acid biosynthesis</keyword>
<keyword id="KW-0456">Lyase</keyword>
<dbReference type="EC" id="4.2.1.10" evidence="1"/>
<dbReference type="EMBL" id="CP000109">
    <property type="protein sequence ID" value="ABB41041.1"/>
    <property type="molecule type" value="Genomic_DNA"/>
</dbReference>
<dbReference type="SMR" id="Q31II2"/>
<dbReference type="STRING" id="317025.Tcr_0445"/>
<dbReference type="KEGG" id="tcx:Tcr_0445"/>
<dbReference type="eggNOG" id="COG0757">
    <property type="taxonomic scope" value="Bacteria"/>
</dbReference>
<dbReference type="HOGENOM" id="CLU_090968_1_0_6"/>
<dbReference type="OrthoDB" id="9790793at2"/>
<dbReference type="UniPathway" id="UPA00053">
    <property type="reaction ID" value="UER00086"/>
</dbReference>
<dbReference type="GO" id="GO:0003855">
    <property type="term" value="F:3-dehydroquinate dehydratase activity"/>
    <property type="evidence" value="ECO:0007669"/>
    <property type="project" value="UniProtKB-UniRule"/>
</dbReference>
<dbReference type="GO" id="GO:0008652">
    <property type="term" value="P:amino acid biosynthetic process"/>
    <property type="evidence" value="ECO:0007669"/>
    <property type="project" value="UniProtKB-KW"/>
</dbReference>
<dbReference type="GO" id="GO:0009073">
    <property type="term" value="P:aromatic amino acid family biosynthetic process"/>
    <property type="evidence" value="ECO:0007669"/>
    <property type="project" value="UniProtKB-KW"/>
</dbReference>
<dbReference type="GO" id="GO:0009423">
    <property type="term" value="P:chorismate biosynthetic process"/>
    <property type="evidence" value="ECO:0007669"/>
    <property type="project" value="UniProtKB-UniRule"/>
</dbReference>
<dbReference type="GO" id="GO:0019631">
    <property type="term" value="P:quinate catabolic process"/>
    <property type="evidence" value="ECO:0007669"/>
    <property type="project" value="TreeGrafter"/>
</dbReference>
<dbReference type="CDD" id="cd00466">
    <property type="entry name" value="DHQase_II"/>
    <property type="match status" value="1"/>
</dbReference>
<dbReference type="Gene3D" id="3.40.50.9100">
    <property type="entry name" value="Dehydroquinase, class II"/>
    <property type="match status" value="1"/>
</dbReference>
<dbReference type="HAMAP" id="MF_00169">
    <property type="entry name" value="AroQ"/>
    <property type="match status" value="1"/>
</dbReference>
<dbReference type="InterPro" id="IPR001874">
    <property type="entry name" value="DHquinase_II"/>
</dbReference>
<dbReference type="InterPro" id="IPR018509">
    <property type="entry name" value="DHquinase_II_CS"/>
</dbReference>
<dbReference type="InterPro" id="IPR036441">
    <property type="entry name" value="DHquinase_II_sf"/>
</dbReference>
<dbReference type="NCBIfam" id="TIGR01088">
    <property type="entry name" value="aroQ"/>
    <property type="match status" value="1"/>
</dbReference>
<dbReference type="NCBIfam" id="NF003804">
    <property type="entry name" value="PRK05395.1-1"/>
    <property type="match status" value="1"/>
</dbReference>
<dbReference type="NCBIfam" id="NF003805">
    <property type="entry name" value="PRK05395.1-2"/>
    <property type="match status" value="1"/>
</dbReference>
<dbReference type="NCBIfam" id="NF003806">
    <property type="entry name" value="PRK05395.1-3"/>
    <property type="match status" value="1"/>
</dbReference>
<dbReference type="NCBIfam" id="NF003807">
    <property type="entry name" value="PRK05395.1-4"/>
    <property type="match status" value="1"/>
</dbReference>
<dbReference type="PANTHER" id="PTHR21272">
    <property type="entry name" value="CATABOLIC 3-DEHYDROQUINASE"/>
    <property type="match status" value="1"/>
</dbReference>
<dbReference type="PANTHER" id="PTHR21272:SF3">
    <property type="entry name" value="CATABOLIC 3-DEHYDROQUINASE"/>
    <property type="match status" value="1"/>
</dbReference>
<dbReference type="Pfam" id="PF01220">
    <property type="entry name" value="DHquinase_II"/>
    <property type="match status" value="1"/>
</dbReference>
<dbReference type="PIRSF" id="PIRSF001399">
    <property type="entry name" value="DHquinase_II"/>
    <property type="match status" value="1"/>
</dbReference>
<dbReference type="SUPFAM" id="SSF52304">
    <property type="entry name" value="Type II 3-dehydroquinate dehydratase"/>
    <property type="match status" value="1"/>
</dbReference>
<dbReference type="PROSITE" id="PS01029">
    <property type="entry name" value="DEHYDROQUINASE_II"/>
    <property type="match status" value="1"/>
</dbReference>
<reference key="1">
    <citation type="journal article" date="2006" name="PLoS Biol.">
        <title>The genome of deep-sea vent chemolithoautotroph Thiomicrospira crunogena XCL-2.</title>
        <authorList>
            <person name="Scott K.M."/>
            <person name="Sievert S.M."/>
            <person name="Abril F.N."/>
            <person name="Ball L.A."/>
            <person name="Barrett C.J."/>
            <person name="Blake R.A."/>
            <person name="Boller A.J."/>
            <person name="Chain P.S.G."/>
            <person name="Clark J.A."/>
            <person name="Davis C.R."/>
            <person name="Detter C."/>
            <person name="Do K.F."/>
            <person name="Dobrinski K.P."/>
            <person name="Faza B.I."/>
            <person name="Fitzpatrick K.A."/>
            <person name="Freyermuth S.K."/>
            <person name="Harmer T.L."/>
            <person name="Hauser L.J."/>
            <person name="Huegler M."/>
            <person name="Kerfeld C.A."/>
            <person name="Klotz M.G."/>
            <person name="Kong W.W."/>
            <person name="Land M."/>
            <person name="Lapidus A."/>
            <person name="Larimer F.W."/>
            <person name="Longo D.L."/>
            <person name="Lucas S."/>
            <person name="Malfatti S.A."/>
            <person name="Massey S.E."/>
            <person name="Martin D.D."/>
            <person name="McCuddin Z."/>
            <person name="Meyer F."/>
            <person name="Moore J.L."/>
            <person name="Ocampo L.H. Jr."/>
            <person name="Paul J.H."/>
            <person name="Paulsen I.T."/>
            <person name="Reep D.K."/>
            <person name="Ren Q."/>
            <person name="Ross R.L."/>
            <person name="Sato P.Y."/>
            <person name="Thomas P."/>
            <person name="Tinkham L.E."/>
            <person name="Zeruth G.T."/>
        </authorList>
    </citation>
    <scope>NUCLEOTIDE SEQUENCE [LARGE SCALE GENOMIC DNA]</scope>
    <source>
        <strain>DSM 25203 / XCL-2</strain>
    </source>
</reference>
<gene>
    <name evidence="1" type="primary">aroQ</name>
    <name type="ordered locus">Tcr_0445</name>
</gene>
<evidence type="ECO:0000255" key="1">
    <source>
        <dbReference type="HAMAP-Rule" id="MF_00169"/>
    </source>
</evidence>
<accession>Q31II2</accession>
<organism>
    <name type="scientific">Hydrogenovibrio crunogenus (strain DSM 25203 / XCL-2)</name>
    <name type="common">Thiomicrospira crunogena</name>
    <dbReference type="NCBI Taxonomy" id="317025"/>
    <lineage>
        <taxon>Bacteria</taxon>
        <taxon>Pseudomonadati</taxon>
        <taxon>Pseudomonadota</taxon>
        <taxon>Gammaproteobacteria</taxon>
        <taxon>Thiotrichales</taxon>
        <taxon>Piscirickettsiaceae</taxon>
        <taxon>Hydrogenovibrio</taxon>
    </lineage>
</organism>
<name>AROQ_HYDCU</name>
<sequence length="144" mass="16100">MANILVINGPNLNMLGKREPEHYGRQTLGDIIEELETLADDYEVRLYNFQSNAEHEIVERIQTAIDDIDFIIINPAAFTHTSVAIRDALSTVKIPFIEVHLSNIHKREAFRTHSYFSDLAEGVIAGLGPIGYQLALAAAVEKLK</sequence>
<feature type="chain" id="PRO_1000023529" description="3-dehydroquinate dehydratase">
    <location>
        <begin position="1"/>
        <end position="144"/>
    </location>
</feature>
<feature type="active site" description="Proton acceptor" evidence="1">
    <location>
        <position position="23"/>
    </location>
</feature>
<feature type="active site" description="Proton donor" evidence="1">
    <location>
        <position position="100"/>
    </location>
</feature>
<feature type="binding site" evidence="1">
    <location>
        <position position="74"/>
    </location>
    <ligand>
        <name>substrate</name>
    </ligand>
</feature>
<feature type="binding site" evidence="1">
    <location>
        <position position="80"/>
    </location>
    <ligand>
        <name>substrate</name>
    </ligand>
</feature>
<feature type="binding site" evidence="1">
    <location>
        <position position="87"/>
    </location>
    <ligand>
        <name>substrate</name>
    </ligand>
</feature>
<feature type="binding site" evidence="1">
    <location>
        <begin position="101"/>
        <end position="102"/>
    </location>
    <ligand>
        <name>substrate</name>
    </ligand>
</feature>
<feature type="binding site" evidence="1">
    <location>
        <position position="111"/>
    </location>
    <ligand>
        <name>substrate</name>
    </ligand>
</feature>
<feature type="site" description="Transition state stabilizer" evidence="1">
    <location>
        <position position="18"/>
    </location>
</feature>
<protein>
    <recommendedName>
        <fullName evidence="1">3-dehydroquinate dehydratase</fullName>
        <shortName evidence="1">3-dehydroquinase</shortName>
        <ecNumber evidence="1">4.2.1.10</ecNumber>
    </recommendedName>
    <alternativeName>
        <fullName evidence="1">Type II DHQase</fullName>
    </alternativeName>
</protein>
<comment type="function">
    <text evidence="1">Catalyzes a trans-dehydration via an enolate intermediate.</text>
</comment>
<comment type="catalytic activity">
    <reaction evidence="1">
        <text>3-dehydroquinate = 3-dehydroshikimate + H2O</text>
        <dbReference type="Rhea" id="RHEA:21096"/>
        <dbReference type="ChEBI" id="CHEBI:15377"/>
        <dbReference type="ChEBI" id="CHEBI:16630"/>
        <dbReference type="ChEBI" id="CHEBI:32364"/>
        <dbReference type="EC" id="4.2.1.10"/>
    </reaction>
</comment>
<comment type="pathway">
    <text evidence="1">Metabolic intermediate biosynthesis; chorismate biosynthesis; chorismate from D-erythrose 4-phosphate and phosphoenolpyruvate: step 3/7.</text>
</comment>
<comment type="subunit">
    <text evidence="1">Homododecamer.</text>
</comment>
<comment type="similarity">
    <text evidence="1">Belongs to the type-II 3-dehydroquinase family.</text>
</comment>